<evidence type="ECO:0000250" key="1"/>
<evidence type="ECO:0000250" key="2">
    <source>
        <dbReference type="UniProtKB" id="P00693"/>
    </source>
</evidence>
<evidence type="ECO:0000255" key="3"/>
<evidence type="ECO:0000305" key="4"/>
<evidence type="ECO:0000312" key="5">
    <source>
        <dbReference type="EMBL" id="EAZ44988.1"/>
    </source>
</evidence>
<reference key="1">
    <citation type="journal article" date="1991" name="Plant Mol. Biol.">
        <title>Characterization of an alpha-amylase multigene cluster in rice.</title>
        <authorList>
            <person name="Sutliff T.D."/>
            <person name="Huang N."/>
            <person name="Litts J.C."/>
            <person name="Rodriguez R.L."/>
        </authorList>
    </citation>
    <scope>NUCLEOTIDE SEQUENCE [GENOMIC DNA]</scope>
    <source>
        <strain>cv. M202</strain>
        <tissue>Etiolated leaf</tissue>
    </source>
</reference>
<reference key="2">
    <citation type="submission" date="1989-05" db="EMBL/GenBank/DDBJ databases">
        <title>Isolation and characterization of a rice alpha-amylase multigene locus.</title>
        <authorList>
            <person name="Sutliff T.D."/>
            <person name="Huang N."/>
            <person name="Rodriguez R.L."/>
        </authorList>
    </citation>
    <scope>NUCLEOTIDE SEQUENCE [GENOMIC DNA]</scope>
</reference>
<reference key="3">
    <citation type="journal article" date="2005" name="Nature">
        <title>The map-based sequence of the rice genome.</title>
        <authorList>
            <consortium name="International rice genome sequencing project (IRGSP)"/>
        </authorList>
    </citation>
    <scope>NUCLEOTIDE SEQUENCE [LARGE SCALE GENOMIC DNA]</scope>
    <source>
        <strain>cv. Nipponbare</strain>
    </source>
</reference>
<reference key="4">
    <citation type="journal article" date="2008" name="Nucleic Acids Res.">
        <title>The rice annotation project database (RAP-DB): 2008 update.</title>
        <authorList>
            <consortium name="The rice annotation project (RAP)"/>
        </authorList>
    </citation>
    <scope>GENOME REANNOTATION</scope>
    <source>
        <strain>cv. Nipponbare</strain>
    </source>
</reference>
<reference key="5">
    <citation type="journal article" date="2013" name="Rice">
        <title>Improvement of the Oryza sativa Nipponbare reference genome using next generation sequence and optical map data.</title>
        <authorList>
            <person name="Kawahara Y."/>
            <person name="de la Bastide M."/>
            <person name="Hamilton J.P."/>
            <person name="Kanamori H."/>
            <person name="McCombie W.R."/>
            <person name="Ouyang S."/>
            <person name="Schwartz D.C."/>
            <person name="Tanaka T."/>
            <person name="Wu J."/>
            <person name="Zhou S."/>
            <person name="Childs K.L."/>
            <person name="Davidson R.M."/>
            <person name="Lin H."/>
            <person name="Quesada-Ocampo L."/>
            <person name="Vaillancourt B."/>
            <person name="Sakai H."/>
            <person name="Lee S.S."/>
            <person name="Kim J."/>
            <person name="Numa H."/>
            <person name="Itoh T."/>
            <person name="Buell C.R."/>
            <person name="Matsumoto T."/>
        </authorList>
    </citation>
    <scope>GENOME REANNOTATION</scope>
    <source>
        <strain>cv. Nipponbare</strain>
    </source>
</reference>
<reference key="6">
    <citation type="journal article" date="2005" name="PLoS Biol.">
        <title>The genomes of Oryza sativa: a history of duplications.</title>
        <authorList>
            <person name="Yu J."/>
            <person name="Wang J."/>
            <person name="Lin W."/>
            <person name="Li S."/>
            <person name="Li H."/>
            <person name="Zhou J."/>
            <person name="Ni P."/>
            <person name="Dong W."/>
            <person name="Hu S."/>
            <person name="Zeng C."/>
            <person name="Zhang J."/>
            <person name="Zhang Y."/>
            <person name="Li R."/>
            <person name="Xu Z."/>
            <person name="Li S."/>
            <person name="Li X."/>
            <person name="Zheng H."/>
            <person name="Cong L."/>
            <person name="Lin L."/>
            <person name="Yin J."/>
            <person name="Geng J."/>
            <person name="Li G."/>
            <person name="Shi J."/>
            <person name="Liu J."/>
            <person name="Lv H."/>
            <person name="Li J."/>
            <person name="Wang J."/>
            <person name="Deng Y."/>
            <person name="Ran L."/>
            <person name="Shi X."/>
            <person name="Wang X."/>
            <person name="Wu Q."/>
            <person name="Li C."/>
            <person name="Ren X."/>
            <person name="Wang J."/>
            <person name="Wang X."/>
            <person name="Li D."/>
            <person name="Liu D."/>
            <person name="Zhang X."/>
            <person name="Ji Z."/>
            <person name="Zhao W."/>
            <person name="Sun Y."/>
            <person name="Zhang Z."/>
            <person name="Bao J."/>
            <person name="Han Y."/>
            <person name="Dong L."/>
            <person name="Ji J."/>
            <person name="Chen P."/>
            <person name="Wu S."/>
            <person name="Liu J."/>
            <person name="Xiao Y."/>
            <person name="Bu D."/>
            <person name="Tan J."/>
            <person name="Yang L."/>
            <person name="Ye C."/>
            <person name="Zhang J."/>
            <person name="Xu J."/>
            <person name="Zhou Y."/>
            <person name="Yu Y."/>
            <person name="Zhang B."/>
            <person name="Zhuang S."/>
            <person name="Wei H."/>
            <person name="Liu B."/>
            <person name="Lei M."/>
            <person name="Yu H."/>
            <person name="Li Y."/>
            <person name="Xu H."/>
            <person name="Wei S."/>
            <person name="He X."/>
            <person name="Fang L."/>
            <person name="Zhang Z."/>
            <person name="Zhang Y."/>
            <person name="Huang X."/>
            <person name="Su Z."/>
            <person name="Tong W."/>
            <person name="Li J."/>
            <person name="Tong Z."/>
            <person name="Li S."/>
            <person name="Ye J."/>
            <person name="Wang L."/>
            <person name="Fang L."/>
            <person name="Lei T."/>
            <person name="Chen C.-S."/>
            <person name="Chen H.-C."/>
            <person name="Xu Z."/>
            <person name="Li H."/>
            <person name="Huang H."/>
            <person name="Zhang F."/>
            <person name="Xu H."/>
            <person name="Li N."/>
            <person name="Zhao C."/>
            <person name="Li S."/>
            <person name="Dong L."/>
            <person name="Huang Y."/>
            <person name="Li L."/>
            <person name="Xi Y."/>
            <person name="Qi Q."/>
            <person name="Li W."/>
            <person name="Zhang B."/>
            <person name="Hu W."/>
            <person name="Zhang Y."/>
            <person name="Tian X."/>
            <person name="Jiao Y."/>
            <person name="Liang X."/>
            <person name="Jin J."/>
            <person name="Gao L."/>
            <person name="Zheng W."/>
            <person name="Hao B."/>
            <person name="Liu S.-M."/>
            <person name="Wang W."/>
            <person name="Yuan L."/>
            <person name="Cao M."/>
            <person name="McDermott J."/>
            <person name="Samudrala R."/>
            <person name="Wang J."/>
            <person name="Wong G.K.-S."/>
            <person name="Yang H."/>
        </authorList>
    </citation>
    <scope>NUCLEOTIDE SEQUENCE [LARGE SCALE GENOMIC DNA]</scope>
    <source>
        <strain>cv. Nipponbare</strain>
    </source>
</reference>
<reference key="7">
    <citation type="journal article" date="1992" name="Gene">
        <title>Regulation of alpha-amylase-encoding gene expression in germinating seeds and cultured cells of rice.</title>
        <authorList>
            <person name="Yu S.M."/>
            <person name="Tzou W.S."/>
            <person name="Lo W.S."/>
            <person name="Kuo Y.H."/>
            <person name="Lee H.T."/>
            <person name="Wu R."/>
        </authorList>
    </citation>
    <scope>NUCLEOTIDE SEQUENCE OF 372-438</scope>
</reference>
<organism>
    <name type="scientific">Oryza sativa subsp. japonica</name>
    <name type="common">Rice</name>
    <dbReference type="NCBI Taxonomy" id="39947"/>
    <lineage>
        <taxon>Eukaryota</taxon>
        <taxon>Viridiplantae</taxon>
        <taxon>Streptophyta</taxon>
        <taxon>Embryophyta</taxon>
        <taxon>Tracheophyta</taxon>
        <taxon>Spermatophyta</taxon>
        <taxon>Magnoliopsida</taxon>
        <taxon>Liliopsida</taxon>
        <taxon>Poales</taxon>
        <taxon>Poaceae</taxon>
        <taxon>BOP clade</taxon>
        <taxon>Oryzoideae</taxon>
        <taxon>Oryzeae</taxon>
        <taxon>Oryzinae</taxon>
        <taxon>Oryza</taxon>
        <taxon>Oryza sativa</taxon>
    </lineage>
</organism>
<feature type="signal peptide" evidence="3">
    <location>
        <begin position="1"/>
        <end position="26"/>
    </location>
</feature>
<feature type="chain" id="PRO_0000001413" description="Alpha-amylase isozyme 3B">
    <location>
        <begin position="27"/>
        <end position="438"/>
    </location>
</feature>
<feature type="active site" description="Nucleophile" evidence="2">
    <location>
        <position position="205"/>
    </location>
</feature>
<feature type="active site" description="Proton donor" evidence="2">
    <location>
        <position position="230"/>
    </location>
</feature>
<feature type="binding site" evidence="2">
    <location>
        <begin position="70"/>
        <end position="72"/>
    </location>
    <ligand>
        <name>substrate</name>
    </ligand>
</feature>
<feature type="binding site" evidence="2">
    <location>
        <begin position="77"/>
        <end position="78"/>
    </location>
    <ligand>
        <name>substrate</name>
    </ligand>
</feature>
<feature type="binding site" evidence="2">
    <location>
        <position position="117"/>
    </location>
    <ligand>
        <name>Ca(2+)</name>
        <dbReference type="ChEBI" id="CHEBI:29108"/>
        <label>1</label>
    </ligand>
</feature>
<feature type="binding site" evidence="2">
    <location>
        <position position="134"/>
    </location>
    <ligand>
        <name>Ca(2+)</name>
        <dbReference type="ChEBI" id="CHEBI:29108"/>
        <label>2</label>
    </ligand>
</feature>
<feature type="binding site" evidence="2">
    <location>
        <position position="137"/>
    </location>
    <ligand>
        <name>Ca(2+)</name>
        <dbReference type="ChEBI" id="CHEBI:29108"/>
        <label>2</label>
    </ligand>
</feature>
<feature type="binding site" evidence="2">
    <location>
        <position position="139"/>
    </location>
    <ligand>
        <name>Ca(2+)</name>
        <dbReference type="ChEBI" id="CHEBI:29108"/>
        <label>2</label>
    </ligand>
</feature>
<feature type="binding site" evidence="2">
    <location>
        <position position="143"/>
    </location>
    <ligand>
        <name>Ca(2+)</name>
        <dbReference type="ChEBI" id="CHEBI:29108"/>
        <label>2</label>
    </ligand>
</feature>
<feature type="binding site" evidence="2">
    <location>
        <position position="153"/>
    </location>
    <ligand>
        <name>Ca(2+)</name>
        <dbReference type="ChEBI" id="CHEBI:29108"/>
        <label>3</label>
    </ligand>
</feature>
<feature type="binding site" evidence="2">
    <location>
        <position position="164"/>
    </location>
    <ligand>
        <name>Ca(2+)</name>
        <dbReference type="ChEBI" id="CHEBI:29108"/>
        <label>1</label>
    </ligand>
</feature>
<feature type="binding site" evidence="2">
    <location>
        <position position="167"/>
    </location>
    <ligand>
        <name>Ca(2+)</name>
        <dbReference type="ChEBI" id="CHEBI:29108"/>
        <label>1</label>
    </ligand>
</feature>
<feature type="binding site" evidence="2">
    <location>
        <position position="168"/>
    </location>
    <ligand>
        <name>Ca(2+)</name>
        <dbReference type="ChEBI" id="CHEBI:29108"/>
        <label>3</label>
    </ligand>
</feature>
<feature type="binding site" evidence="2">
    <location>
        <position position="169"/>
    </location>
    <ligand>
        <name>Ca(2+)</name>
        <dbReference type="ChEBI" id="CHEBI:29108"/>
        <label>3</label>
    </ligand>
</feature>
<feature type="binding site" evidence="2">
    <location>
        <position position="172"/>
    </location>
    <ligand>
        <name>Ca(2+)</name>
        <dbReference type="ChEBI" id="CHEBI:29108"/>
        <label>3</label>
    </ligand>
</feature>
<feature type="binding site" evidence="2">
    <location>
        <position position="174"/>
    </location>
    <ligand>
        <name>Ca(2+)</name>
        <dbReference type="ChEBI" id="CHEBI:29108"/>
        <label>1</label>
    </ligand>
</feature>
<feature type="binding site" evidence="2">
    <location>
        <position position="174"/>
    </location>
    <ligand>
        <name>Ca(2+)</name>
        <dbReference type="ChEBI" id="CHEBI:29108"/>
        <label>3</label>
    </ligand>
</feature>
<feature type="binding site" evidence="2">
    <location>
        <begin position="203"/>
        <end position="208"/>
    </location>
    <ligand>
        <name>substrate</name>
    </ligand>
</feature>
<feature type="binding site" evidence="2">
    <location>
        <position position="209"/>
    </location>
    <ligand>
        <name>Ca(2+)</name>
        <dbReference type="ChEBI" id="CHEBI:29108"/>
        <label>1</label>
    </ligand>
</feature>
<feature type="binding site" evidence="2">
    <location>
        <position position="232"/>
    </location>
    <ligand>
        <name>substrate</name>
    </ligand>
</feature>
<feature type="binding site" evidence="2">
    <location>
        <position position="234"/>
    </location>
    <ligand>
        <name>substrate</name>
    </ligand>
</feature>
<feature type="binding site" evidence="2">
    <location>
        <position position="252"/>
    </location>
    <ligand>
        <name>substrate</name>
    </ligand>
</feature>
<feature type="binding site" evidence="2">
    <location>
        <position position="293"/>
    </location>
    <ligand>
        <name>substrate</name>
    </ligand>
</feature>
<feature type="binding site" evidence="2">
    <location>
        <begin position="299"/>
        <end position="301"/>
    </location>
    <ligand>
        <name>substrate</name>
    </ligand>
</feature>
<feature type="binding site" evidence="2">
    <location>
        <position position="312"/>
    </location>
    <ligand>
        <name>substrate</name>
    </ligand>
</feature>
<feature type="binding site" evidence="2">
    <location>
        <position position="318"/>
    </location>
    <ligand>
        <name>substrate</name>
    </ligand>
</feature>
<feature type="binding site" evidence="2">
    <location>
        <position position="397"/>
    </location>
    <ligand>
        <name>substrate</name>
    </ligand>
</feature>
<feature type="binding site" evidence="2">
    <location>
        <begin position="402"/>
        <end position="404"/>
    </location>
    <ligand>
        <name>substrate</name>
    </ligand>
</feature>
<feature type="binding site" evidence="2">
    <location>
        <begin position="414"/>
        <end position="420"/>
    </location>
    <ligand>
        <name>substrate</name>
    </ligand>
</feature>
<feature type="binding site" evidence="2">
    <location>
        <position position="424"/>
    </location>
    <ligand>
        <name>substrate</name>
    </ligand>
</feature>
<feature type="site" description="Transition state stabilizer" evidence="2">
    <location>
        <position position="313"/>
    </location>
</feature>
<gene>
    <name type="primary">AMY1.6</name>
    <name type="synonym">AMY3B</name>
    <name evidence="4" type="ordered locus">Os09g0457600</name>
    <name evidence="4" type="ordered locus">LOC_Os09g28420</name>
    <name type="ORF">B1045B05.10</name>
    <name evidence="5" type="ORF">OsJ_29630</name>
</gene>
<name>AMY3B_ORYSJ</name>
<sequence length="438" mass="48592">MAKRIASMSSLLLIALLCLSSHLAQAQVLFQGFNWESWKKQGGWYNFLHGHVDDIAATGVTHVWLPPPSHSVAPQGYMPGRLYDLDASKYGTGAELRSLIAAFHSKGIKCVADIVINHRCADYKDSRGIYCIFEGGTPDSRLDWGPDMICSDDTQYSNGRGHRDTGADFGAAPDIDHLNTRVQTELSDWLNWLKSDVGFDGWRLDFAKGYSAAVAKTYVDNTDPSFVVAEIWSNMRYDGNGEPSWNQDGDRQELVNWAQAVGGPASAFDFTTKGELQAAVQGELWRMKDGNGKAPGMIGWLPEKAVTFIDNHDTGSTQNSWPFPSDKVMQGYAYILTHPGVPCIFYDHVFDWNLKQEISTLAAVRSRNEIHPGSKLKILAAEGDVYVAMIDDKVITKIGTRYDVGNLIPSDFHVVAHGNNYCIWEKSGLRVPAGRHHY</sequence>
<proteinExistence type="evidence at transcript level"/>
<keyword id="KW-0106">Calcium</keyword>
<keyword id="KW-0119">Carbohydrate metabolism</keyword>
<keyword id="KW-0326">Glycosidase</keyword>
<keyword id="KW-0378">Hydrolase</keyword>
<keyword id="KW-0479">Metal-binding</keyword>
<keyword id="KW-1185">Reference proteome</keyword>
<keyword id="KW-0732">Signal</keyword>
<accession>P27937</accession>
<accession>A0A0N7KQX6</accession>
<accession>A3BZJ9</accession>
<accession>Q67U03</accession>
<dbReference type="EC" id="3.2.1.1" evidence="2"/>
<dbReference type="EMBL" id="X56337">
    <property type="protein sequence ID" value="CAA39777.1"/>
    <property type="molecule type" value="Genomic_DNA"/>
</dbReference>
<dbReference type="EMBL" id="M24941">
    <property type="protein sequence ID" value="AAA33897.1"/>
    <property type="molecule type" value="Genomic_DNA"/>
</dbReference>
<dbReference type="EMBL" id="AP005891">
    <property type="protein sequence ID" value="BAD38368.1"/>
    <property type="molecule type" value="Genomic_DNA"/>
</dbReference>
<dbReference type="EMBL" id="AP008215">
    <property type="protein sequence ID" value="BAH94599.1"/>
    <property type="molecule type" value="Genomic_DNA"/>
</dbReference>
<dbReference type="EMBL" id="AP014965">
    <property type="protein sequence ID" value="BAT08442.1"/>
    <property type="molecule type" value="Genomic_DNA"/>
</dbReference>
<dbReference type="EMBL" id="CM000146">
    <property type="protein sequence ID" value="EAZ44988.1"/>
    <property type="molecule type" value="Genomic_DNA"/>
</dbReference>
<dbReference type="PIR" id="S14957">
    <property type="entry name" value="S14957"/>
</dbReference>
<dbReference type="RefSeq" id="XP_015612113.1">
    <property type="nucleotide sequence ID" value="XM_015756627.1"/>
</dbReference>
<dbReference type="SMR" id="P27937"/>
<dbReference type="FunCoup" id="P27937">
    <property type="interactions" value="259"/>
</dbReference>
<dbReference type="STRING" id="39947.P27937"/>
<dbReference type="CAZy" id="GH13">
    <property type="family name" value="Glycoside Hydrolase Family 13"/>
</dbReference>
<dbReference type="PaxDb" id="39947-P27937"/>
<dbReference type="EnsemblPlants" id="Os09t0457600-00">
    <property type="protein sequence ID" value="Os09t0457600-00"/>
    <property type="gene ID" value="Os09g0457600"/>
</dbReference>
<dbReference type="Gramene" id="Os09t0457600-00">
    <property type="protein sequence ID" value="Os09t0457600-00"/>
    <property type="gene ID" value="Os09g0457600"/>
</dbReference>
<dbReference type="KEGG" id="dosa:Os09g0457500"/>
<dbReference type="eggNOG" id="KOG0471">
    <property type="taxonomic scope" value="Eukaryota"/>
</dbReference>
<dbReference type="HOGENOM" id="CLU_030069_1_0_1"/>
<dbReference type="InParanoid" id="P27937"/>
<dbReference type="OMA" id="FADINFA"/>
<dbReference type="OrthoDB" id="550577at2759"/>
<dbReference type="Proteomes" id="UP000000763">
    <property type="component" value="Chromosome 9"/>
</dbReference>
<dbReference type="Proteomes" id="UP000007752">
    <property type="component" value="Chromosome 9"/>
</dbReference>
<dbReference type="Proteomes" id="UP000059680">
    <property type="component" value="Chromosome 9"/>
</dbReference>
<dbReference type="ExpressionAtlas" id="P27937">
    <property type="expression patterns" value="differential"/>
</dbReference>
<dbReference type="GO" id="GO:0004556">
    <property type="term" value="F:alpha-amylase activity"/>
    <property type="evidence" value="ECO:0000250"/>
    <property type="project" value="Gramene"/>
</dbReference>
<dbReference type="GO" id="GO:0005509">
    <property type="term" value="F:calcium ion binding"/>
    <property type="evidence" value="ECO:0007669"/>
    <property type="project" value="InterPro"/>
</dbReference>
<dbReference type="GO" id="GO:0005983">
    <property type="term" value="P:starch catabolic process"/>
    <property type="evidence" value="ECO:0000250"/>
    <property type="project" value="Gramene"/>
</dbReference>
<dbReference type="GO" id="GO:0005987">
    <property type="term" value="P:sucrose catabolic process"/>
    <property type="evidence" value="ECO:0000250"/>
    <property type="project" value="Gramene"/>
</dbReference>
<dbReference type="CDD" id="cd11314">
    <property type="entry name" value="AmyAc_arch_bac_plant_AmyA"/>
    <property type="match status" value="1"/>
</dbReference>
<dbReference type="FunFam" id="2.60.40.1180:FF:000021">
    <property type="entry name" value="Alpha-amylase"/>
    <property type="match status" value="1"/>
</dbReference>
<dbReference type="Gene3D" id="3.20.20.80">
    <property type="entry name" value="Glycosidases"/>
    <property type="match status" value="1"/>
</dbReference>
<dbReference type="Gene3D" id="2.60.40.1180">
    <property type="entry name" value="Golgi alpha-mannosidase II"/>
    <property type="match status" value="1"/>
</dbReference>
<dbReference type="InterPro" id="IPR012850">
    <property type="entry name" value="A-amylase_bs_C"/>
</dbReference>
<dbReference type="InterPro" id="IPR013775">
    <property type="entry name" value="A-amylase_pln"/>
</dbReference>
<dbReference type="InterPro" id="IPR006046">
    <property type="entry name" value="Alpha_amylase"/>
</dbReference>
<dbReference type="InterPro" id="IPR006047">
    <property type="entry name" value="Glyco_hydro_13_cat_dom"/>
</dbReference>
<dbReference type="InterPro" id="IPR013780">
    <property type="entry name" value="Glyco_hydro_b"/>
</dbReference>
<dbReference type="InterPro" id="IPR017853">
    <property type="entry name" value="Glycoside_hydrolase_SF"/>
</dbReference>
<dbReference type="PANTHER" id="PTHR43447">
    <property type="entry name" value="ALPHA-AMYLASE"/>
    <property type="match status" value="1"/>
</dbReference>
<dbReference type="Pfam" id="PF07821">
    <property type="entry name" value="Alpha-amyl_C2"/>
    <property type="match status" value="1"/>
</dbReference>
<dbReference type="Pfam" id="PF00128">
    <property type="entry name" value="Alpha-amylase"/>
    <property type="match status" value="1"/>
</dbReference>
<dbReference type="PIRSF" id="PIRSF001028">
    <property type="entry name" value="Alph-amls_plant"/>
    <property type="match status" value="1"/>
</dbReference>
<dbReference type="PRINTS" id="PR00110">
    <property type="entry name" value="ALPHAAMYLASE"/>
</dbReference>
<dbReference type="SMART" id="SM00642">
    <property type="entry name" value="Aamy"/>
    <property type="match status" value="1"/>
</dbReference>
<dbReference type="SMART" id="SM00810">
    <property type="entry name" value="Alpha-amyl_C2"/>
    <property type="match status" value="1"/>
</dbReference>
<dbReference type="SUPFAM" id="SSF51445">
    <property type="entry name" value="(Trans)glycosidases"/>
    <property type="match status" value="1"/>
</dbReference>
<dbReference type="SUPFAM" id="SSF51011">
    <property type="entry name" value="Glycosyl hydrolase domain"/>
    <property type="match status" value="1"/>
</dbReference>
<comment type="function">
    <text>Important for breakdown of endosperm starch during germination.</text>
</comment>
<comment type="catalytic activity">
    <reaction evidence="2">
        <text>Endohydrolysis of (1-&gt;4)-alpha-D-glucosidic linkages in polysaccharides containing three or more (1-&gt;4)-alpha-linked D-glucose units.</text>
        <dbReference type="EC" id="3.2.1.1"/>
    </reaction>
</comment>
<comment type="cofactor">
    <cofactor evidence="2">
        <name>Ca(2+)</name>
        <dbReference type="ChEBI" id="CHEBI:29108"/>
    </cofactor>
    <text evidence="2">Binds 3 Ca(2+) ions per subunit.</text>
</comment>
<comment type="subunit">
    <text>Monomer.</text>
</comment>
<comment type="tissue specificity">
    <text>Germinating seeds.</text>
</comment>
<comment type="developmental stage">
    <text>Expressed at a high level during germination in the aleurones cells under the control of the plant hormone gibberellic acid and in the developing grains at a low level.</text>
</comment>
<comment type="miscellaneous">
    <text evidence="1">Binds starch not only at the active site, but also via accessory binding sites on the protein surface that are important for efficient binding to starch granules and thereby increase enzyme activity.</text>
</comment>
<comment type="similarity">
    <text evidence="4">Belongs to the glycosyl hydrolase 13 family.</text>
</comment>
<protein>
    <recommendedName>
        <fullName>Alpha-amylase isozyme 3B</fullName>
        <ecNumber evidence="2">3.2.1.1</ecNumber>
    </recommendedName>
    <alternativeName>
        <fullName>1,4-alpha-D-glucan glucanohydrolase</fullName>
    </alternativeName>
</protein>